<sequence length="315" mass="35117">MACAEFSFHVPSLEELAGVMQKGLKDNFADVQVSVVDCPDLTKEPFTFPVKGICGKTRIAEVGGVPYLLPLVNQKKVYDLNKIAKEIKLPGAFILGAGAGPFQTLGFNSEFMPVIQTESEHKPPVNGSYFAHVNPADGGCLLEKYSEKCHDFQCALLANLFASEGQPGKVIEVKAKRRTGPLNFVTCMRETLEKHYGNKPIGMGGTFIIQKGKVKSHIMPAEFSSCPLNSDEEVNKWLHFYEMKAPLVCLPVFVSRDPGFDLRLEHTHFFSRHGEGGHYHYDTTPDIVEYLGYFLPAEFLYRIDQPKETHSIGRD</sequence>
<evidence type="ECO:0000269" key="1">
    <source>
    </source>
</evidence>
<evidence type="ECO:0000269" key="2">
    <source>
    </source>
</evidence>
<evidence type="ECO:0000303" key="3">
    <source>
    </source>
</evidence>
<evidence type="ECO:0000303" key="4">
    <source>
    </source>
</evidence>
<evidence type="ECO:0000303" key="5">
    <source ref="1"/>
</evidence>
<evidence type="ECO:0000305" key="6"/>
<evidence type="ECO:0000305" key="7">
    <source>
    </source>
</evidence>
<evidence type="ECO:0007744" key="8">
    <source>
        <dbReference type="PDB" id="1XCR"/>
    </source>
</evidence>
<evidence type="ECO:0007829" key="9">
    <source>
        <dbReference type="PDB" id="1XCR"/>
    </source>
</evidence>
<keyword id="KW-0002">3D-structure</keyword>
<keyword id="KW-0025">Alternative splicing</keyword>
<keyword id="KW-0963">Cytoplasm</keyword>
<keyword id="KW-0378">Hydrolase</keyword>
<keyword id="KW-0479">Metal-binding</keyword>
<keyword id="KW-0539">Nucleus</keyword>
<keyword id="KW-1267">Proteomics identification</keyword>
<keyword id="KW-1185">Reference proteome</keyword>
<keyword id="KW-0862">Zinc</keyword>
<proteinExistence type="evidence at protein level"/>
<name>CK054_HUMAN</name>
<accession>Q9H0W9</accession>
<accession>A8K850</accession>
<accession>Q6FI88</accession>
<accession>Q6XYB0</accession>
<accession>Q96EI3</accession>
<accession>Q96IX1</accession>
<accession>Q9Y6B4</accession>
<reference key="1">
    <citation type="submission" date="1998-09" db="EMBL/GenBank/DDBJ databases">
        <title>Human PTD012 mRNA, complete cds.</title>
        <authorList>
            <person name="Mao Y."/>
            <person name="Song H."/>
            <person name="Peng Y."/>
            <person name="Huang Q."/>
            <person name="Dai M."/>
            <person name="Zhang Q."/>
            <person name="Mao M."/>
            <person name="Fu G."/>
            <person name="Luo M."/>
            <person name="Chen J."/>
            <person name="Hu R."/>
        </authorList>
    </citation>
    <scope>NUCLEOTIDE SEQUENCE [LARGE SCALE MRNA] (ISOFORM 4)</scope>
    <source>
        <tissue>Pituitary tumor</tissue>
    </source>
</reference>
<reference key="2">
    <citation type="journal article" date="2001" name="Genome Res.">
        <title>Towards a catalog of human genes and proteins: sequencing and analysis of 500 novel complete protein coding human cDNAs.</title>
        <authorList>
            <person name="Wiemann S."/>
            <person name="Weil B."/>
            <person name="Wellenreuther R."/>
            <person name="Gassenhuber J."/>
            <person name="Glassl S."/>
            <person name="Ansorge W."/>
            <person name="Boecher M."/>
            <person name="Bloecker H."/>
            <person name="Bauersachs S."/>
            <person name="Blum H."/>
            <person name="Lauber J."/>
            <person name="Duesterhoeft A."/>
            <person name="Beyer A."/>
            <person name="Koehrer K."/>
            <person name="Strack N."/>
            <person name="Mewes H.-W."/>
            <person name="Ottenwaelder B."/>
            <person name="Obermaier B."/>
            <person name="Tampe J."/>
            <person name="Heubner D."/>
            <person name="Wambutt R."/>
            <person name="Korn B."/>
            <person name="Klein M."/>
            <person name="Poustka A."/>
        </authorList>
    </citation>
    <scope>NUCLEOTIDE SEQUENCE [LARGE SCALE MRNA] (ISOFORM 1)</scope>
    <source>
        <tissue>Brain</tissue>
    </source>
</reference>
<reference key="3">
    <citation type="submission" date="2004-06" db="EMBL/GenBank/DDBJ databases">
        <title>Cloning of human full open reading frames in Gateway(TM) system entry vector (pDONR201).</title>
        <authorList>
            <person name="Ebert L."/>
            <person name="Schick M."/>
            <person name="Neubert P."/>
            <person name="Schatten R."/>
            <person name="Henze S."/>
            <person name="Korn B."/>
        </authorList>
    </citation>
    <scope>NUCLEOTIDE SEQUENCE [LARGE SCALE MRNA] (ISOFORM 1)</scope>
</reference>
<reference key="4">
    <citation type="journal article" date="2004" name="Proc. Natl. Acad. Sci. U.S.A.">
        <title>Large-scale cDNA transfection screening for genes related to cancer development and progression.</title>
        <authorList>
            <person name="Wan D."/>
            <person name="Gong Y."/>
            <person name="Qin W."/>
            <person name="Zhang P."/>
            <person name="Li J."/>
            <person name="Wei L."/>
            <person name="Zhou X."/>
            <person name="Li H."/>
            <person name="Qiu X."/>
            <person name="Zhong F."/>
            <person name="He L."/>
            <person name="Yu J."/>
            <person name="Yao G."/>
            <person name="Jiang H."/>
            <person name="Qian L."/>
            <person name="Yu Y."/>
            <person name="Shu H."/>
            <person name="Chen X."/>
            <person name="Xu H."/>
            <person name="Guo M."/>
            <person name="Pan Z."/>
            <person name="Chen Y."/>
            <person name="Ge C."/>
            <person name="Yang S."/>
            <person name="Gu J."/>
        </authorList>
    </citation>
    <scope>NUCLEOTIDE SEQUENCE [LARGE SCALE MRNA] (ISOFORM 1)</scope>
</reference>
<reference key="5">
    <citation type="journal article" date="2004" name="Nat. Genet.">
        <title>Complete sequencing and characterization of 21,243 full-length human cDNAs.</title>
        <authorList>
            <person name="Ota T."/>
            <person name="Suzuki Y."/>
            <person name="Nishikawa T."/>
            <person name="Otsuki T."/>
            <person name="Sugiyama T."/>
            <person name="Irie R."/>
            <person name="Wakamatsu A."/>
            <person name="Hayashi K."/>
            <person name="Sato H."/>
            <person name="Nagai K."/>
            <person name="Kimura K."/>
            <person name="Makita H."/>
            <person name="Sekine M."/>
            <person name="Obayashi M."/>
            <person name="Nishi T."/>
            <person name="Shibahara T."/>
            <person name="Tanaka T."/>
            <person name="Ishii S."/>
            <person name="Yamamoto J."/>
            <person name="Saito K."/>
            <person name="Kawai Y."/>
            <person name="Isono Y."/>
            <person name="Nakamura Y."/>
            <person name="Nagahari K."/>
            <person name="Murakami K."/>
            <person name="Yasuda T."/>
            <person name="Iwayanagi T."/>
            <person name="Wagatsuma M."/>
            <person name="Shiratori A."/>
            <person name="Sudo H."/>
            <person name="Hosoiri T."/>
            <person name="Kaku Y."/>
            <person name="Kodaira H."/>
            <person name="Kondo H."/>
            <person name="Sugawara M."/>
            <person name="Takahashi M."/>
            <person name="Kanda K."/>
            <person name="Yokoi T."/>
            <person name="Furuya T."/>
            <person name="Kikkawa E."/>
            <person name="Omura Y."/>
            <person name="Abe K."/>
            <person name="Kamihara K."/>
            <person name="Katsuta N."/>
            <person name="Sato K."/>
            <person name="Tanikawa M."/>
            <person name="Yamazaki M."/>
            <person name="Ninomiya K."/>
            <person name="Ishibashi T."/>
            <person name="Yamashita H."/>
            <person name="Murakawa K."/>
            <person name="Fujimori K."/>
            <person name="Tanai H."/>
            <person name="Kimata M."/>
            <person name="Watanabe M."/>
            <person name="Hiraoka S."/>
            <person name="Chiba Y."/>
            <person name="Ishida S."/>
            <person name="Ono Y."/>
            <person name="Takiguchi S."/>
            <person name="Watanabe S."/>
            <person name="Yosida M."/>
            <person name="Hotuta T."/>
            <person name="Kusano J."/>
            <person name="Kanehori K."/>
            <person name="Takahashi-Fujii A."/>
            <person name="Hara H."/>
            <person name="Tanase T.-O."/>
            <person name="Nomura Y."/>
            <person name="Togiya S."/>
            <person name="Komai F."/>
            <person name="Hara R."/>
            <person name="Takeuchi K."/>
            <person name="Arita M."/>
            <person name="Imose N."/>
            <person name="Musashino K."/>
            <person name="Yuuki H."/>
            <person name="Oshima A."/>
            <person name="Sasaki N."/>
            <person name="Aotsuka S."/>
            <person name="Yoshikawa Y."/>
            <person name="Matsunawa H."/>
            <person name="Ichihara T."/>
            <person name="Shiohata N."/>
            <person name="Sano S."/>
            <person name="Moriya S."/>
            <person name="Momiyama H."/>
            <person name="Satoh N."/>
            <person name="Takami S."/>
            <person name="Terashima Y."/>
            <person name="Suzuki O."/>
            <person name="Nakagawa S."/>
            <person name="Senoh A."/>
            <person name="Mizoguchi H."/>
            <person name="Goto Y."/>
            <person name="Shimizu F."/>
            <person name="Wakebe H."/>
            <person name="Hishigaki H."/>
            <person name="Watanabe T."/>
            <person name="Sugiyama A."/>
            <person name="Takemoto M."/>
            <person name="Kawakami B."/>
            <person name="Yamazaki M."/>
            <person name="Watanabe K."/>
            <person name="Kumagai A."/>
            <person name="Itakura S."/>
            <person name="Fukuzumi Y."/>
            <person name="Fujimori Y."/>
            <person name="Komiyama M."/>
            <person name="Tashiro H."/>
            <person name="Tanigami A."/>
            <person name="Fujiwara T."/>
            <person name="Ono T."/>
            <person name="Yamada K."/>
            <person name="Fujii Y."/>
            <person name="Ozaki K."/>
            <person name="Hirao M."/>
            <person name="Ohmori Y."/>
            <person name="Kawabata A."/>
            <person name="Hikiji T."/>
            <person name="Kobatake N."/>
            <person name="Inagaki H."/>
            <person name="Ikema Y."/>
            <person name="Okamoto S."/>
            <person name="Okitani R."/>
            <person name="Kawakami T."/>
            <person name="Noguchi S."/>
            <person name="Itoh T."/>
            <person name="Shigeta K."/>
            <person name="Senba T."/>
            <person name="Matsumura K."/>
            <person name="Nakajima Y."/>
            <person name="Mizuno T."/>
            <person name="Morinaga M."/>
            <person name="Sasaki M."/>
            <person name="Togashi T."/>
            <person name="Oyama M."/>
            <person name="Hata H."/>
            <person name="Watanabe M."/>
            <person name="Komatsu T."/>
            <person name="Mizushima-Sugano J."/>
            <person name="Satoh T."/>
            <person name="Shirai Y."/>
            <person name="Takahashi Y."/>
            <person name="Nakagawa K."/>
            <person name="Okumura K."/>
            <person name="Nagase T."/>
            <person name="Nomura N."/>
            <person name="Kikuchi H."/>
            <person name="Masuho Y."/>
            <person name="Yamashita R."/>
            <person name="Nakai K."/>
            <person name="Yada T."/>
            <person name="Nakamura Y."/>
            <person name="Ohara O."/>
            <person name="Isogai T."/>
            <person name="Sugano S."/>
        </authorList>
    </citation>
    <scope>NUCLEOTIDE SEQUENCE [LARGE SCALE MRNA] (ISOFORM 1)</scope>
    <source>
        <tissue>Esophagus</tissue>
    </source>
</reference>
<reference key="6">
    <citation type="submission" date="2005-07" db="EMBL/GenBank/DDBJ databases">
        <authorList>
            <person name="Mural R.J."/>
            <person name="Istrail S."/>
            <person name="Sutton G.G."/>
            <person name="Florea L."/>
            <person name="Halpern A.L."/>
            <person name="Mobarry C.M."/>
            <person name="Lippert R."/>
            <person name="Walenz B."/>
            <person name="Shatkay H."/>
            <person name="Dew I."/>
            <person name="Miller J.R."/>
            <person name="Flanigan M.J."/>
            <person name="Edwards N.J."/>
            <person name="Bolanos R."/>
            <person name="Fasulo D."/>
            <person name="Halldorsson B.V."/>
            <person name="Hannenhalli S."/>
            <person name="Turner R."/>
            <person name="Yooseph S."/>
            <person name="Lu F."/>
            <person name="Nusskern D.R."/>
            <person name="Shue B.C."/>
            <person name="Zheng X.H."/>
            <person name="Zhong F."/>
            <person name="Delcher A.L."/>
            <person name="Huson D.H."/>
            <person name="Kravitz S.A."/>
            <person name="Mouchard L."/>
            <person name="Reinert K."/>
            <person name="Remington K.A."/>
            <person name="Clark A.G."/>
            <person name="Waterman M.S."/>
            <person name="Eichler E.E."/>
            <person name="Adams M.D."/>
            <person name="Hunkapiller M.W."/>
            <person name="Myers E.W."/>
            <person name="Venter J.C."/>
        </authorList>
    </citation>
    <scope>NUCLEOTIDE SEQUENCE [LARGE SCALE GENOMIC DNA]</scope>
</reference>
<reference key="7">
    <citation type="journal article" date="2004" name="Genome Res.">
        <title>The status, quality, and expansion of the NIH full-length cDNA project: the Mammalian Gene Collection (MGC).</title>
        <authorList>
            <consortium name="The MGC Project Team"/>
        </authorList>
    </citation>
    <scope>NUCLEOTIDE SEQUENCE [LARGE SCALE MRNA] (ISOFORMS 2 AND 3)</scope>
    <source>
        <tissue>Colon</tissue>
        <tissue>Skeletal muscle</tissue>
    </source>
</reference>
<reference key="8">
    <citation type="journal article" date="2011" name="BMC Syst. Biol.">
        <title>Initial characterization of the human central proteome.</title>
        <authorList>
            <person name="Burkard T.R."/>
            <person name="Planyavsky M."/>
            <person name="Kaupe I."/>
            <person name="Breitwieser F.P."/>
            <person name="Buerckstuemmer T."/>
            <person name="Bennett K.L."/>
            <person name="Superti-Furga G."/>
            <person name="Colinge J."/>
        </authorList>
    </citation>
    <scope>IDENTIFICATION BY MASS SPECTROMETRY [LARGE SCALE ANALYSIS]</scope>
</reference>
<reference key="9">
    <citation type="journal article" date="2014" name="J. Proteomics">
        <title>An enzyme assisted RP-RPLC approach for in-depth analysis of human liver phosphoproteome.</title>
        <authorList>
            <person name="Bian Y."/>
            <person name="Song C."/>
            <person name="Cheng K."/>
            <person name="Dong M."/>
            <person name="Wang F."/>
            <person name="Huang J."/>
            <person name="Sun D."/>
            <person name="Wang L."/>
            <person name="Ye M."/>
            <person name="Zou H."/>
        </authorList>
    </citation>
    <scope>IDENTIFICATION BY MASS SPECTROMETRY [LARGE SCALE ANALYSIS]</scope>
    <source>
        <tissue>Liver</tissue>
    </source>
</reference>
<reference key="10">
    <citation type="journal article" date="2023" name="Commun. Biol.">
        <title>C11orf54 promotes DNA repair via blocking CMA-mediated degradation of HIF1A.</title>
        <authorList>
            <person name="Tan J."/>
            <person name="Wang W."/>
            <person name="Liu X."/>
            <person name="Xu J."/>
            <person name="Che Y."/>
            <person name="Liu Y."/>
            <person name="Hu J."/>
            <person name="Hu L."/>
            <person name="Li J."/>
            <person name="Zhou Q."/>
        </authorList>
    </citation>
    <scope>FUNCTION</scope>
    <scope>SUBCELLULAR LOCATION</scope>
</reference>
<reference key="11">
    <citation type="journal article" date="2006" name="Protein Sci.">
        <title>Crystal structure of Homo sapiens PTD012 reveals a zinc-containing hydrolase fold.</title>
        <authorList>
            <person name="Manjasetty B.A."/>
            <person name="Buessow K."/>
            <person name="Fieber-Erdmann M."/>
            <person name="Roske Y."/>
            <person name="Gobom J."/>
            <person name="Scheich C."/>
            <person name="Goetz F."/>
            <person name="Niesen F.H."/>
            <person name="Heinemann U."/>
        </authorList>
    </citation>
    <scope>X-RAY CRYSTALLOGRAPHY (1.7 ANGSTROMS) OF 2-315 IN COMPLEX WITH ZN(2+)</scope>
    <scope>FUNCTION</scope>
    <scope>CATALYTIC ACTIVITY</scope>
    <scope>SUBUNIT</scope>
    <scope>SUBCELLULAR LOCATION</scope>
    <scope>COFACTOR</scope>
    <scope>ALTERNATIVE SPLICING</scope>
</reference>
<gene>
    <name type="primary">C11orf54</name>
    <name type="ORF">LP4947</name>
    <name evidence="4" type="ORF">PTD012</name>
</gene>
<dbReference type="EC" id="3.1.-.-" evidence="1"/>
<dbReference type="EMBL" id="AF092133">
    <property type="protein sequence ID" value="AAD40375.1"/>
    <property type="molecule type" value="mRNA"/>
</dbReference>
<dbReference type="EMBL" id="AL136605">
    <property type="protein sequence ID" value="CAB66540.1"/>
    <property type="molecule type" value="mRNA"/>
</dbReference>
<dbReference type="EMBL" id="CR533538">
    <property type="protein sequence ID" value="CAG38569.1"/>
    <property type="molecule type" value="mRNA"/>
</dbReference>
<dbReference type="EMBL" id="AY203960">
    <property type="protein sequence ID" value="AAP34483.1"/>
    <property type="status" value="ALT_FRAME"/>
    <property type="molecule type" value="mRNA"/>
</dbReference>
<dbReference type="EMBL" id="AK292215">
    <property type="protein sequence ID" value="BAF84904.1"/>
    <property type="molecule type" value="mRNA"/>
</dbReference>
<dbReference type="EMBL" id="CH471065">
    <property type="protein sequence ID" value="EAW66915.1"/>
    <property type="molecule type" value="Genomic_DNA"/>
</dbReference>
<dbReference type="EMBL" id="BC007110">
    <property type="protein sequence ID" value="AAH07110.2"/>
    <property type="status" value="ALT_INIT"/>
    <property type="molecule type" value="mRNA"/>
</dbReference>
<dbReference type="EMBL" id="BC012298">
    <property type="protein sequence ID" value="AAH12298.1"/>
    <property type="molecule type" value="mRNA"/>
</dbReference>
<dbReference type="CCDS" id="CCDS66204.1">
    <molecule id="Q9H0W9-1"/>
</dbReference>
<dbReference type="CCDS" id="CCDS73366.1">
    <molecule id="Q9H0W9-2"/>
</dbReference>
<dbReference type="CCDS" id="CCDS8294.1">
    <molecule id="Q9H0W9-3"/>
</dbReference>
<dbReference type="RefSeq" id="NP_001272996.1">
    <molecule id="Q9H0W9-1"/>
    <property type="nucleotide sequence ID" value="NM_001286067.2"/>
</dbReference>
<dbReference type="RefSeq" id="NP_001272997.1">
    <molecule id="Q9H0W9-1"/>
    <property type="nucleotide sequence ID" value="NM_001286068.2"/>
</dbReference>
<dbReference type="RefSeq" id="NP_001272998.1">
    <molecule id="Q9H0W9-1"/>
    <property type="nucleotide sequence ID" value="NM_001286069.2"/>
</dbReference>
<dbReference type="RefSeq" id="NP_001272999.1">
    <molecule id="Q9H0W9-2"/>
    <property type="nucleotide sequence ID" value="NM_001286070.2"/>
</dbReference>
<dbReference type="RefSeq" id="NP_001273000.1">
    <property type="nucleotide sequence ID" value="NM_001286071.1"/>
</dbReference>
<dbReference type="RefSeq" id="NP_001338914.1">
    <molecule id="Q9H0W9-1"/>
    <property type="nucleotide sequence ID" value="NM_001351985.2"/>
</dbReference>
<dbReference type="RefSeq" id="NP_001338915.1">
    <molecule id="Q9H0W9-1"/>
    <property type="nucleotide sequence ID" value="NM_001351986.2"/>
</dbReference>
<dbReference type="RefSeq" id="NP_001338916.1">
    <molecule id="Q9H0W9-1"/>
    <property type="nucleotide sequence ID" value="NM_001351987.2"/>
</dbReference>
<dbReference type="RefSeq" id="NP_001338917.1">
    <molecule id="Q9H0W9-1"/>
    <property type="nucleotide sequence ID" value="NM_001351988.2"/>
</dbReference>
<dbReference type="RefSeq" id="NP_001338918.1">
    <molecule id="Q9H0W9-1"/>
    <property type="nucleotide sequence ID" value="NM_001351989.2"/>
</dbReference>
<dbReference type="RefSeq" id="NP_001338919.1">
    <molecule id="Q9H0W9-2"/>
    <property type="nucleotide sequence ID" value="NM_001351990.2"/>
</dbReference>
<dbReference type="RefSeq" id="NP_001338920.1">
    <molecule id="Q9H0W9-3"/>
    <property type="nucleotide sequence ID" value="NM_001351991.2"/>
</dbReference>
<dbReference type="RefSeq" id="NP_001356335.1">
    <molecule id="Q9H0W9-4"/>
    <property type="nucleotide sequence ID" value="NM_001369406.2"/>
</dbReference>
<dbReference type="RefSeq" id="NP_054758.2">
    <molecule id="Q9H0W9-3"/>
    <property type="nucleotide sequence ID" value="NM_014039.3"/>
</dbReference>
<dbReference type="RefSeq" id="XP_006718887.1">
    <property type="nucleotide sequence ID" value="XM_006718824.1"/>
</dbReference>
<dbReference type="RefSeq" id="XP_011541083.1">
    <property type="nucleotide sequence ID" value="XM_011542781.2"/>
</dbReference>
<dbReference type="RefSeq" id="XP_011541084.1">
    <molecule id="Q9H0W9-1"/>
    <property type="nucleotide sequence ID" value="XM_011542782.4"/>
</dbReference>
<dbReference type="RefSeq" id="XP_016873102.1">
    <property type="nucleotide sequence ID" value="XM_017017613.1"/>
</dbReference>
<dbReference type="RefSeq" id="XP_016873103.1">
    <property type="nucleotide sequence ID" value="XM_017017614.1"/>
</dbReference>
<dbReference type="RefSeq" id="XP_016873104.1">
    <property type="nucleotide sequence ID" value="XM_017017615.1"/>
</dbReference>
<dbReference type="RefSeq" id="XP_016873105.1">
    <property type="nucleotide sequence ID" value="XM_017017616.1"/>
</dbReference>
<dbReference type="RefSeq" id="XP_047282788.1">
    <molecule id="Q9H0W9-1"/>
    <property type="nucleotide sequence ID" value="XM_047426832.1"/>
</dbReference>
<dbReference type="RefSeq" id="XP_047282790.1">
    <molecule id="Q9H0W9-3"/>
    <property type="nucleotide sequence ID" value="XM_047426834.1"/>
</dbReference>
<dbReference type="RefSeq" id="XP_054224530.1">
    <molecule id="Q9H0W9-1"/>
    <property type="nucleotide sequence ID" value="XM_054368555.1"/>
</dbReference>
<dbReference type="RefSeq" id="XP_054224531.1">
    <molecule id="Q9H0W9-1"/>
    <property type="nucleotide sequence ID" value="XM_054368556.1"/>
</dbReference>
<dbReference type="RefSeq" id="XP_054224532.1">
    <molecule id="Q9H0W9-1"/>
    <property type="nucleotide sequence ID" value="XM_054368557.1"/>
</dbReference>
<dbReference type="RefSeq" id="XP_054224534.1">
    <molecule id="Q9H0W9-3"/>
    <property type="nucleotide sequence ID" value="XM_054368559.1"/>
</dbReference>
<dbReference type="PDB" id="1XCR">
    <property type="method" value="X-ray"/>
    <property type="resolution" value="1.70 A"/>
    <property type="chains" value="A/B=2-315"/>
</dbReference>
<dbReference type="PDBsum" id="1XCR"/>
<dbReference type="SMR" id="Q9H0W9"/>
<dbReference type="BioGRID" id="118794">
    <property type="interactions" value="57"/>
</dbReference>
<dbReference type="FunCoup" id="Q9H0W9">
    <property type="interactions" value="1296"/>
</dbReference>
<dbReference type="IntAct" id="Q9H0W9">
    <property type="interactions" value="18"/>
</dbReference>
<dbReference type="STRING" id="9606.ENSP00000331209"/>
<dbReference type="GlyCosmos" id="Q9H0W9">
    <property type="glycosylation" value="3 sites, 1 glycan"/>
</dbReference>
<dbReference type="GlyGen" id="Q9H0W9">
    <property type="glycosylation" value="3 sites, 1 O-linked glycan (3 sites)"/>
</dbReference>
<dbReference type="iPTMnet" id="Q9H0W9"/>
<dbReference type="PhosphoSitePlus" id="Q9H0W9"/>
<dbReference type="SwissPalm" id="Q9H0W9"/>
<dbReference type="BioMuta" id="C11orf54"/>
<dbReference type="DMDM" id="74718025"/>
<dbReference type="jPOST" id="Q9H0W9"/>
<dbReference type="MassIVE" id="Q9H0W9"/>
<dbReference type="PaxDb" id="9606-ENSP00000331209"/>
<dbReference type="PeptideAtlas" id="Q9H0W9"/>
<dbReference type="ProteomicsDB" id="80335">
    <molecule id="Q9H0W9-1"/>
</dbReference>
<dbReference type="ProteomicsDB" id="80336">
    <molecule id="Q9H0W9-2"/>
</dbReference>
<dbReference type="ProteomicsDB" id="80337">
    <molecule id="Q9H0W9-3"/>
</dbReference>
<dbReference type="ProteomicsDB" id="80338">
    <molecule id="Q9H0W9-4"/>
</dbReference>
<dbReference type="Pumba" id="Q9H0W9"/>
<dbReference type="Antibodypedia" id="31588">
    <property type="antibodies" value="61 antibodies from 16 providers"/>
</dbReference>
<dbReference type="DNASU" id="28970"/>
<dbReference type="Ensembl" id="ENST00000331239.8">
    <molecule id="Q9H0W9-1"/>
    <property type="protein sequence ID" value="ENSP00000331209.4"/>
    <property type="gene ID" value="ENSG00000182919.15"/>
</dbReference>
<dbReference type="Ensembl" id="ENST00000354421.8">
    <molecule id="Q9H0W9-1"/>
    <property type="protein sequence ID" value="ENSP00000346403.3"/>
    <property type="gene ID" value="ENSG00000182919.15"/>
</dbReference>
<dbReference type="Ensembl" id="ENST00000528099.5">
    <molecule id="Q9H0W9-1"/>
    <property type="protein sequence ID" value="ENSP00000435113.1"/>
    <property type="gene ID" value="ENSG00000182919.15"/>
</dbReference>
<dbReference type="Ensembl" id="ENST00000528288.5">
    <molecule id="Q9H0W9-3"/>
    <property type="protein sequence ID" value="ENSP00000433721.1"/>
    <property type="gene ID" value="ENSG00000182919.15"/>
</dbReference>
<dbReference type="Ensembl" id="ENST00000540113.5">
    <molecule id="Q9H0W9-2"/>
    <property type="protein sequence ID" value="ENSP00000442094.1"/>
    <property type="gene ID" value="ENSG00000182919.15"/>
</dbReference>
<dbReference type="GeneID" id="28970"/>
<dbReference type="KEGG" id="hsa:28970"/>
<dbReference type="MANE-Select" id="ENST00000354421.8">
    <property type="protein sequence ID" value="ENSP00000346403.3"/>
    <property type="RefSeq nucleotide sequence ID" value="NM_001286069.2"/>
    <property type="RefSeq protein sequence ID" value="NP_001272998.1"/>
</dbReference>
<dbReference type="UCSC" id="uc001pef.5">
    <molecule id="Q9H0W9-1"/>
    <property type="organism name" value="human"/>
</dbReference>
<dbReference type="AGR" id="HGNC:30204"/>
<dbReference type="CTD" id="28970"/>
<dbReference type="GeneCards" id="C11orf54"/>
<dbReference type="HGNC" id="HGNC:30204">
    <property type="gene designation" value="C11orf54"/>
</dbReference>
<dbReference type="HPA" id="ENSG00000182919">
    <property type="expression patterns" value="Group enriched (kidney, liver)"/>
</dbReference>
<dbReference type="MIM" id="615810">
    <property type="type" value="gene"/>
</dbReference>
<dbReference type="neXtProt" id="NX_Q9H0W9"/>
<dbReference type="OpenTargets" id="ENSG00000182919"/>
<dbReference type="PharmGKB" id="PA143485349"/>
<dbReference type="VEuPathDB" id="HostDB:ENSG00000182919"/>
<dbReference type="eggNOG" id="KOG4048">
    <property type="taxonomic scope" value="Eukaryota"/>
</dbReference>
<dbReference type="GeneTree" id="ENSGT00390000017214"/>
<dbReference type="InParanoid" id="Q9H0W9"/>
<dbReference type="OMA" id="YHIMPDF"/>
<dbReference type="OrthoDB" id="5119241at2759"/>
<dbReference type="PAN-GO" id="Q9H0W9">
    <property type="GO annotations" value="3 GO annotations based on evolutionary models"/>
</dbReference>
<dbReference type="PhylomeDB" id="Q9H0W9"/>
<dbReference type="TreeFam" id="TF313169"/>
<dbReference type="PathwayCommons" id="Q9H0W9"/>
<dbReference type="SignaLink" id="Q9H0W9"/>
<dbReference type="BioGRID-ORCS" id="28970">
    <property type="hits" value="18 hits in 1128 CRISPR screens"/>
</dbReference>
<dbReference type="ChiTaRS" id="C11orf54">
    <property type="organism name" value="human"/>
</dbReference>
<dbReference type="EvolutionaryTrace" id="Q9H0W9"/>
<dbReference type="GeneWiki" id="C11orf54"/>
<dbReference type="GenomeRNAi" id="28970"/>
<dbReference type="Pharos" id="Q9H0W9">
    <property type="development level" value="Tbio"/>
</dbReference>
<dbReference type="PRO" id="PR:Q9H0W9"/>
<dbReference type="Proteomes" id="UP000005640">
    <property type="component" value="Chromosome 11"/>
</dbReference>
<dbReference type="RNAct" id="Q9H0W9">
    <property type="molecule type" value="protein"/>
</dbReference>
<dbReference type="Bgee" id="ENSG00000182919">
    <property type="expression patterns" value="Expressed in kidney epithelium and 193 other cell types or tissues"/>
</dbReference>
<dbReference type="ExpressionAtlas" id="Q9H0W9">
    <property type="expression patterns" value="baseline and differential"/>
</dbReference>
<dbReference type="GO" id="GO:0005737">
    <property type="term" value="C:cytoplasm"/>
    <property type="evidence" value="ECO:0000314"/>
    <property type="project" value="UniProtKB"/>
</dbReference>
<dbReference type="GO" id="GO:0070062">
    <property type="term" value="C:extracellular exosome"/>
    <property type="evidence" value="ECO:0007005"/>
    <property type="project" value="UniProtKB"/>
</dbReference>
<dbReference type="GO" id="GO:0016604">
    <property type="term" value="C:nuclear body"/>
    <property type="evidence" value="ECO:0000314"/>
    <property type="project" value="HPA"/>
</dbReference>
<dbReference type="GO" id="GO:0005654">
    <property type="term" value="C:nucleoplasm"/>
    <property type="evidence" value="ECO:0000314"/>
    <property type="project" value="HPA"/>
</dbReference>
<dbReference type="GO" id="GO:0005634">
    <property type="term" value="C:nucleus"/>
    <property type="evidence" value="ECO:0000314"/>
    <property type="project" value="LIFEdb"/>
</dbReference>
<dbReference type="GO" id="GO:0016788">
    <property type="term" value="F:hydrolase activity, acting on ester bonds"/>
    <property type="evidence" value="ECO:0000314"/>
    <property type="project" value="FlyBase"/>
</dbReference>
<dbReference type="GO" id="GO:0008270">
    <property type="term" value="F:zinc ion binding"/>
    <property type="evidence" value="ECO:0000314"/>
    <property type="project" value="FlyBase"/>
</dbReference>
<dbReference type="GO" id="GO:0006974">
    <property type="term" value="P:DNA damage response"/>
    <property type="evidence" value="ECO:0000315"/>
    <property type="project" value="UniProtKB"/>
</dbReference>
<dbReference type="GO" id="GO:0006282">
    <property type="term" value="P:regulation of DNA repair"/>
    <property type="evidence" value="ECO:0000315"/>
    <property type="project" value="UniProtKB"/>
</dbReference>
<dbReference type="CDD" id="cd17298">
    <property type="entry name" value="DUF1907"/>
    <property type="match status" value="1"/>
</dbReference>
<dbReference type="InterPro" id="IPR015021">
    <property type="entry name" value="C11orf54_DUF1907"/>
</dbReference>
<dbReference type="PANTHER" id="PTHR13204:SF1">
    <property type="entry name" value="ESTER HYDROLASE C11ORF54"/>
    <property type="match status" value="1"/>
</dbReference>
<dbReference type="PANTHER" id="PTHR13204">
    <property type="entry name" value="PTD012 PROTEIN"/>
    <property type="match status" value="1"/>
</dbReference>
<dbReference type="Pfam" id="PF08925">
    <property type="entry name" value="DUF1907"/>
    <property type="match status" value="1"/>
</dbReference>
<dbReference type="SMART" id="SM01168">
    <property type="entry name" value="DUF1907"/>
    <property type="match status" value="1"/>
</dbReference>
<dbReference type="SUPFAM" id="SSF117856">
    <property type="entry name" value="AF0104/ALDC/Ptd012-like"/>
    <property type="match status" value="1"/>
</dbReference>
<protein>
    <recommendedName>
        <fullName>Ester hydrolase C11orf54</fullName>
        <ecNumber evidence="1">3.1.-.-</ecNumber>
    </recommendedName>
</protein>
<organism>
    <name type="scientific">Homo sapiens</name>
    <name type="common">Human</name>
    <dbReference type="NCBI Taxonomy" id="9606"/>
    <lineage>
        <taxon>Eukaryota</taxon>
        <taxon>Metazoa</taxon>
        <taxon>Chordata</taxon>
        <taxon>Craniata</taxon>
        <taxon>Vertebrata</taxon>
        <taxon>Euteleostomi</taxon>
        <taxon>Mammalia</taxon>
        <taxon>Eutheria</taxon>
        <taxon>Euarchontoglires</taxon>
        <taxon>Primates</taxon>
        <taxon>Haplorrhini</taxon>
        <taxon>Catarrhini</taxon>
        <taxon>Hominidae</taxon>
        <taxon>Homo</taxon>
    </lineage>
</organism>
<feature type="chain" id="PRO_0000246029" description="Ester hydrolase C11orf54">
    <location>
        <begin position="1"/>
        <end position="315"/>
    </location>
</feature>
<feature type="binding site" evidence="1 8">
    <location>
        <position position="266"/>
    </location>
    <ligand>
        <name>Zn(2+)</name>
        <dbReference type="ChEBI" id="CHEBI:29105"/>
        <note>catalytic</note>
    </ligand>
</feature>
<feature type="binding site" evidence="1 8">
    <location>
        <position position="268"/>
    </location>
    <ligand>
        <name>Zn(2+)</name>
        <dbReference type="ChEBI" id="CHEBI:29105"/>
        <note>catalytic</note>
    </ligand>
</feature>
<feature type="binding site" evidence="1 8">
    <location>
        <position position="278"/>
    </location>
    <ligand>
        <name>Zn(2+)</name>
        <dbReference type="ChEBI" id="CHEBI:29105"/>
        <note>catalytic</note>
    </ligand>
</feature>
<feature type="splice variant" id="VSP_019817" description="In isoform 4." evidence="5">
    <location>
        <begin position="1"/>
        <end position="111"/>
    </location>
</feature>
<feature type="splice variant" id="VSP_019818" description="In isoform 2." evidence="3">
    <location>
        <begin position="1"/>
        <end position="19"/>
    </location>
</feature>
<feature type="splice variant" id="VSP_019821" description="In isoform 3." evidence="3">
    <location>
        <begin position="170"/>
        <end position="219"/>
    </location>
</feature>
<feature type="sequence conflict" description="In Ref. 3; CAG38569." evidence="6" ref="3">
    <original>V</original>
    <variation>A</variation>
    <location>
        <position position="10"/>
    </location>
</feature>
<feature type="sequence conflict" description="In Ref. 3; CAG38569." evidence="6" ref="3">
    <original>F</original>
    <variation>L</variation>
    <location>
        <position position="184"/>
    </location>
</feature>
<feature type="sequence conflict" description="In Ref. 1; AAD40375." evidence="6" ref="1">
    <original>D</original>
    <variation>G</variation>
    <location>
        <position position="304"/>
    </location>
</feature>
<feature type="strand" evidence="9">
    <location>
        <begin position="4"/>
        <end position="7"/>
    </location>
</feature>
<feature type="helix" evidence="9">
    <location>
        <begin position="13"/>
        <end position="27"/>
    </location>
</feature>
<feature type="strand" evidence="9">
    <location>
        <begin position="28"/>
        <end position="37"/>
    </location>
</feature>
<feature type="turn" evidence="9">
    <location>
        <begin position="44"/>
        <end position="46"/>
    </location>
</feature>
<feature type="strand" evidence="9">
    <location>
        <begin position="49"/>
        <end position="51"/>
    </location>
</feature>
<feature type="strand" evidence="9">
    <location>
        <begin position="54"/>
        <end position="56"/>
    </location>
</feature>
<feature type="strand" evidence="9">
    <location>
        <begin position="58"/>
        <end position="63"/>
    </location>
</feature>
<feature type="helix" evidence="9">
    <location>
        <begin position="65"/>
        <end position="67"/>
    </location>
</feature>
<feature type="strand" evidence="9">
    <location>
        <begin position="69"/>
        <end position="71"/>
    </location>
</feature>
<feature type="strand" evidence="9">
    <location>
        <begin position="77"/>
        <end position="79"/>
    </location>
</feature>
<feature type="helix" evidence="9">
    <location>
        <begin position="80"/>
        <end position="86"/>
    </location>
</feature>
<feature type="strand" evidence="9">
    <location>
        <begin position="93"/>
        <end position="99"/>
    </location>
</feature>
<feature type="helix" evidence="9">
    <location>
        <begin position="102"/>
        <end position="105"/>
    </location>
</feature>
<feature type="strand" evidence="9">
    <location>
        <begin position="110"/>
        <end position="112"/>
    </location>
</feature>
<feature type="strand" evidence="9">
    <location>
        <begin position="114"/>
        <end position="116"/>
    </location>
</feature>
<feature type="strand" evidence="9">
    <location>
        <begin position="129"/>
        <end position="133"/>
    </location>
</feature>
<feature type="turn" evidence="9">
    <location>
        <begin position="135"/>
        <end position="137"/>
    </location>
</feature>
<feature type="strand" evidence="9">
    <location>
        <begin position="140"/>
        <end position="144"/>
    </location>
</feature>
<feature type="helix" evidence="9">
    <location>
        <begin position="145"/>
        <end position="148"/>
    </location>
</feature>
<feature type="strand" evidence="9">
    <location>
        <begin position="153"/>
        <end position="163"/>
    </location>
</feature>
<feature type="strand" evidence="9">
    <location>
        <begin position="169"/>
        <end position="178"/>
    </location>
</feature>
<feature type="helix" evidence="9">
    <location>
        <begin position="184"/>
        <end position="196"/>
    </location>
</feature>
<feature type="strand" evidence="9">
    <location>
        <begin position="202"/>
        <end position="218"/>
    </location>
</feature>
<feature type="helix" evidence="9">
    <location>
        <begin position="231"/>
        <end position="237"/>
    </location>
</feature>
<feature type="strand" evidence="9">
    <location>
        <begin position="238"/>
        <end position="245"/>
    </location>
</feature>
<feature type="strand" evidence="9">
    <location>
        <begin position="247"/>
        <end position="256"/>
    </location>
</feature>
<feature type="strand" evidence="9">
    <location>
        <begin position="264"/>
        <end position="270"/>
    </location>
</feature>
<feature type="strand" evidence="9">
    <location>
        <begin position="272"/>
        <end position="274"/>
    </location>
</feature>
<feature type="strand" evidence="9">
    <location>
        <begin position="277"/>
        <end position="283"/>
    </location>
</feature>
<feature type="turn" evidence="9">
    <location>
        <begin position="285"/>
        <end position="287"/>
    </location>
</feature>
<feature type="strand" evidence="9">
    <location>
        <begin position="289"/>
        <end position="296"/>
    </location>
</feature>
<feature type="strand" evidence="9">
    <location>
        <begin position="298"/>
        <end position="304"/>
    </location>
</feature>
<comment type="function">
    <text evidence="1 2">Exhibits ester hydrolase activity on the substrate p-nitrophenyl acetate, in vitro (PubMed:16522806). Regulates DNA damage and repair by regulating HIF1A degradation via chaperone-mediated autophagy (CMA) (PubMed:37277441).</text>
</comment>
<comment type="function">
    <molecule>Isoform 3</molecule>
    <text evidence="7">Probably non-functional.</text>
</comment>
<comment type="cofactor">
    <cofactor evidence="7">
        <name>Zn(2+)</name>
        <dbReference type="ChEBI" id="CHEBI:29105"/>
    </cofactor>
</comment>
<comment type="subunit">
    <text evidence="1">Monomer.</text>
</comment>
<comment type="interaction">
    <interactant intactId="EBI-740204">
        <id>Q9H0W9</id>
    </interactant>
    <interactant intactId="EBI-2212028">
        <id>Q9Y2D8</id>
        <label>SSX2IP</label>
    </interactant>
    <organismsDiffer>false</organismsDiffer>
    <experiments>3</experiments>
</comment>
<comment type="interaction">
    <interactant intactId="EBI-740204">
        <id>Q9H0W9</id>
    </interactant>
    <interactant intactId="EBI-358993">
        <id>Q15645</id>
        <label>TRIP13</label>
    </interactant>
    <organismsDiffer>false</organismsDiffer>
    <experiments>3</experiments>
</comment>
<comment type="interaction">
    <interactant intactId="EBI-740204">
        <id>Q9H0W9</id>
    </interactant>
    <interactant intactId="EBI-2107455">
        <id>Q08AM6</id>
        <label>VAC14</label>
    </interactant>
    <organismsDiffer>false</organismsDiffer>
    <experiments>4</experiments>
</comment>
<comment type="interaction">
    <interactant intactId="EBI-12108466">
        <id>Q9H0W9-3</id>
    </interactant>
    <interactant intactId="EBI-11954292">
        <id>Q86V38</id>
        <label>ATN1</label>
    </interactant>
    <organismsDiffer>false</organismsDiffer>
    <experiments>3</experiments>
</comment>
<comment type="interaction">
    <interactant intactId="EBI-12108466">
        <id>Q9H0W9-3</id>
    </interactant>
    <interactant intactId="EBI-718729">
        <id>P55212</id>
        <label>CASP6</label>
    </interactant>
    <organismsDiffer>false</organismsDiffer>
    <experiments>3</experiments>
</comment>
<comment type="interaction">
    <interactant intactId="EBI-12108466">
        <id>Q9H0W9-3</id>
    </interactant>
    <interactant intactId="EBI-6875961">
        <id>P02489</id>
        <label>CRYAA</label>
    </interactant>
    <organismsDiffer>false</organismsDiffer>
    <experiments>3</experiments>
</comment>
<comment type="interaction">
    <interactant intactId="EBI-12108466">
        <id>Q9H0W9-3</id>
    </interactant>
    <interactant intactId="EBI-12593112">
        <id>O75190-2</id>
        <label>DNAJB6</label>
    </interactant>
    <organismsDiffer>false</organismsDiffer>
    <experiments>3</experiments>
</comment>
<comment type="interaction">
    <interactant intactId="EBI-12108466">
        <id>Q9H0W9-3</id>
    </interactant>
    <interactant intactId="EBI-948266">
        <id>O14901</id>
        <label>KLF11</label>
    </interactant>
    <organismsDiffer>false</organismsDiffer>
    <experiments>3</experiments>
</comment>
<comment type="interaction">
    <interactant intactId="EBI-12108466">
        <id>Q9H0W9-3</id>
    </interactant>
    <interactant intactId="EBI-2432309">
        <id>Q92876</id>
        <label>KLK6</label>
    </interactant>
    <organismsDiffer>false</organismsDiffer>
    <experiments>3</experiments>
</comment>
<comment type="interaction">
    <interactant intactId="EBI-12108466">
        <id>Q9H0W9-3</id>
    </interactant>
    <interactant intactId="EBI-21591415">
        <id>P13473-2</id>
        <label>LAMP2</label>
    </interactant>
    <organismsDiffer>false</organismsDiffer>
    <experiments>3</experiments>
</comment>
<comment type="interaction">
    <interactant intactId="EBI-12108466">
        <id>Q9H0W9-3</id>
    </interactant>
    <interactant intactId="EBI-1307">
        <id>Q13153</id>
        <label>PAK1</label>
    </interactant>
    <organismsDiffer>false</organismsDiffer>
    <experiments>3</experiments>
</comment>
<comment type="interaction">
    <interactant intactId="EBI-12108466">
        <id>Q9H0W9-3</id>
    </interactant>
    <interactant intactId="EBI-286642">
        <id>P62826</id>
        <label>RAN</label>
    </interactant>
    <organismsDiffer>false</organismsDiffer>
    <experiments>3</experiments>
</comment>
<comment type="interaction">
    <interactant intactId="EBI-12108466">
        <id>Q9H0W9-3</id>
    </interactant>
    <interactant intactId="EBI-358993">
        <id>Q15645</id>
        <label>TRIP13</label>
    </interactant>
    <organismsDiffer>false</organismsDiffer>
    <experiments>3</experiments>
</comment>
<comment type="interaction">
    <interactant intactId="EBI-12108466">
        <id>Q9H0W9-3</id>
    </interactant>
    <interactant intactId="EBI-2107455">
        <id>Q08AM6</id>
        <label>VAC14</label>
    </interactant>
    <organismsDiffer>false</organismsDiffer>
    <experiments>3</experiments>
</comment>
<comment type="interaction">
    <interactant intactId="EBI-25849710">
        <id>Q9H0W9-4</id>
    </interactant>
    <interactant intactId="EBI-352682">
        <id>P04792</id>
        <label>HSPB1</label>
    </interactant>
    <organismsDiffer>false</organismsDiffer>
    <experiments>3</experiments>
</comment>
<comment type="interaction">
    <interactant intactId="EBI-25849710">
        <id>Q9H0W9-4</id>
    </interactant>
    <interactant intactId="EBI-10975473">
        <id>O60333-2</id>
        <label>KIF1B</label>
    </interactant>
    <organismsDiffer>false</organismsDiffer>
    <experiments>3</experiments>
</comment>
<comment type="interaction">
    <interactant intactId="EBI-25849710">
        <id>Q9H0W9-4</id>
    </interactant>
    <interactant intactId="EBI-720609">
        <id>O76024</id>
        <label>WFS1</label>
    </interactant>
    <organismsDiffer>false</organismsDiffer>
    <experiments>3</experiments>
</comment>
<comment type="subcellular location">
    <subcellularLocation>
        <location evidence="1">Nucleus</location>
    </subcellularLocation>
    <subcellularLocation>
        <location evidence="2">Cytoplasm</location>
    </subcellularLocation>
    <text evidence="2">Mainly located in the cytoplasm.</text>
</comment>
<comment type="alternative products">
    <event type="alternative splicing"/>
    <isoform>
        <id>Q9H0W9-1</id>
        <name>1</name>
        <sequence type="displayed"/>
    </isoform>
    <isoform>
        <id>Q9H0W9-2</id>
        <name>2</name>
        <sequence type="described" ref="VSP_019818"/>
    </isoform>
    <isoform>
        <id>Q9H0W9-3</id>
        <name>3</name>
        <sequence type="described" ref="VSP_019821"/>
    </isoform>
    <isoform>
        <id>Q9H0W9-4</id>
        <name>4</name>
        <sequence type="described" ref="VSP_019817"/>
    </isoform>
</comment>
<comment type="sequence caution" evidence="6">
    <conflict type="erroneous initiation">
        <sequence resource="EMBL-CDS" id="AAH07110"/>
    </conflict>
</comment>
<comment type="sequence caution" evidence="6">
    <conflict type="frameshift">
        <sequence resource="EMBL-CDS" id="AAP34483"/>
    </conflict>
</comment>